<protein>
    <recommendedName>
        <fullName evidence="1">Adenine phosphoribosyltransferase</fullName>
        <shortName evidence="1">APRT</shortName>
        <ecNumber evidence="1">2.4.2.7</ecNumber>
    </recommendedName>
</protein>
<reference key="1">
    <citation type="journal article" date="2011" name="J. Bacteriol.">
        <title>Genome of Ochrobactrum anthropi ATCC 49188 T, a versatile opportunistic pathogen and symbiont of several eukaryotic hosts.</title>
        <authorList>
            <person name="Chain P.S."/>
            <person name="Lang D.M."/>
            <person name="Comerci D.J."/>
            <person name="Malfatti S.A."/>
            <person name="Vergez L.M."/>
            <person name="Shin M."/>
            <person name="Ugalde R.A."/>
            <person name="Garcia E."/>
            <person name="Tolmasky M.E."/>
        </authorList>
    </citation>
    <scope>NUCLEOTIDE SEQUENCE [LARGE SCALE GENOMIC DNA]</scope>
    <source>
        <strain>ATCC 49188 / DSM 6882 / CCUG 24695 / JCM 21032 / LMG 3331 / NBRC 15819 / NCTC 12168 / Alc 37</strain>
    </source>
</reference>
<accession>A6WZD8</accession>
<proteinExistence type="inferred from homology"/>
<sequence>MESGFKASLKDAIRTIPDYPKPGVQFRDVTTLMGDAQAFRRSVDELVYPYAGNKVDKVAGIEARGFILGGAIAHQLSAGFVPIRKKGKLPRDTVRIAYSLEYGIDEMEMHRDAIEKGERIILVDDLIATGGTAEAAAKLLLQMGAEIVAACFIIDLPDLGGRKKLEALGVPVRTLVAFEGD</sequence>
<keyword id="KW-0963">Cytoplasm</keyword>
<keyword id="KW-0328">Glycosyltransferase</keyword>
<keyword id="KW-0660">Purine salvage</keyword>
<keyword id="KW-1185">Reference proteome</keyword>
<keyword id="KW-0808">Transferase</keyword>
<dbReference type="EC" id="2.4.2.7" evidence="1"/>
<dbReference type="EMBL" id="CP000758">
    <property type="protein sequence ID" value="ABS14342.1"/>
    <property type="molecule type" value="Genomic_DNA"/>
</dbReference>
<dbReference type="RefSeq" id="WP_010659612.1">
    <property type="nucleotide sequence ID" value="NC_009667.1"/>
</dbReference>
<dbReference type="SMR" id="A6WZD8"/>
<dbReference type="STRING" id="439375.Oant_1626"/>
<dbReference type="KEGG" id="oan:Oant_1626"/>
<dbReference type="eggNOG" id="COG0503">
    <property type="taxonomic scope" value="Bacteria"/>
</dbReference>
<dbReference type="HOGENOM" id="CLU_063339_3_0_5"/>
<dbReference type="PhylomeDB" id="A6WZD8"/>
<dbReference type="UniPathway" id="UPA00588">
    <property type="reaction ID" value="UER00646"/>
</dbReference>
<dbReference type="Proteomes" id="UP000002301">
    <property type="component" value="Chromosome 1"/>
</dbReference>
<dbReference type="GO" id="GO:0005737">
    <property type="term" value="C:cytoplasm"/>
    <property type="evidence" value="ECO:0007669"/>
    <property type="project" value="UniProtKB-SubCell"/>
</dbReference>
<dbReference type="GO" id="GO:0002055">
    <property type="term" value="F:adenine binding"/>
    <property type="evidence" value="ECO:0007669"/>
    <property type="project" value="TreeGrafter"/>
</dbReference>
<dbReference type="GO" id="GO:0003999">
    <property type="term" value="F:adenine phosphoribosyltransferase activity"/>
    <property type="evidence" value="ECO:0007669"/>
    <property type="project" value="UniProtKB-UniRule"/>
</dbReference>
<dbReference type="GO" id="GO:0016208">
    <property type="term" value="F:AMP binding"/>
    <property type="evidence" value="ECO:0007669"/>
    <property type="project" value="TreeGrafter"/>
</dbReference>
<dbReference type="GO" id="GO:0006168">
    <property type="term" value="P:adenine salvage"/>
    <property type="evidence" value="ECO:0007669"/>
    <property type="project" value="InterPro"/>
</dbReference>
<dbReference type="GO" id="GO:0044209">
    <property type="term" value="P:AMP salvage"/>
    <property type="evidence" value="ECO:0007669"/>
    <property type="project" value="UniProtKB-UniRule"/>
</dbReference>
<dbReference type="GO" id="GO:0006166">
    <property type="term" value="P:purine ribonucleoside salvage"/>
    <property type="evidence" value="ECO:0007669"/>
    <property type="project" value="UniProtKB-KW"/>
</dbReference>
<dbReference type="CDD" id="cd06223">
    <property type="entry name" value="PRTases_typeI"/>
    <property type="match status" value="1"/>
</dbReference>
<dbReference type="FunFam" id="3.40.50.2020:FF:000021">
    <property type="entry name" value="Adenine phosphoribosyltransferase"/>
    <property type="match status" value="1"/>
</dbReference>
<dbReference type="Gene3D" id="3.40.50.2020">
    <property type="match status" value="1"/>
</dbReference>
<dbReference type="HAMAP" id="MF_00004">
    <property type="entry name" value="Aden_phosphoribosyltr"/>
    <property type="match status" value="1"/>
</dbReference>
<dbReference type="InterPro" id="IPR005764">
    <property type="entry name" value="Ade_phspho_trans"/>
</dbReference>
<dbReference type="InterPro" id="IPR000836">
    <property type="entry name" value="PRibTrfase_dom"/>
</dbReference>
<dbReference type="InterPro" id="IPR029057">
    <property type="entry name" value="PRTase-like"/>
</dbReference>
<dbReference type="InterPro" id="IPR050054">
    <property type="entry name" value="UPRTase/APRTase"/>
</dbReference>
<dbReference type="NCBIfam" id="TIGR01090">
    <property type="entry name" value="apt"/>
    <property type="match status" value="1"/>
</dbReference>
<dbReference type="NCBIfam" id="NF002634">
    <property type="entry name" value="PRK02304.1-3"/>
    <property type="match status" value="1"/>
</dbReference>
<dbReference type="NCBIfam" id="NF002636">
    <property type="entry name" value="PRK02304.1-5"/>
    <property type="match status" value="1"/>
</dbReference>
<dbReference type="PANTHER" id="PTHR32315">
    <property type="entry name" value="ADENINE PHOSPHORIBOSYLTRANSFERASE"/>
    <property type="match status" value="1"/>
</dbReference>
<dbReference type="PANTHER" id="PTHR32315:SF3">
    <property type="entry name" value="ADENINE PHOSPHORIBOSYLTRANSFERASE"/>
    <property type="match status" value="1"/>
</dbReference>
<dbReference type="Pfam" id="PF00156">
    <property type="entry name" value="Pribosyltran"/>
    <property type="match status" value="1"/>
</dbReference>
<dbReference type="SUPFAM" id="SSF53271">
    <property type="entry name" value="PRTase-like"/>
    <property type="match status" value="1"/>
</dbReference>
<dbReference type="PROSITE" id="PS00103">
    <property type="entry name" value="PUR_PYR_PR_TRANSFER"/>
    <property type="match status" value="1"/>
</dbReference>
<organism>
    <name type="scientific">Brucella anthropi (strain ATCC 49188 / DSM 6882 / CCUG 24695 / JCM 21032 / LMG 3331 / NBRC 15819 / NCTC 12168 / Alc 37)</name>
    <name type="common">Ochrobactrum anthropi</name>
    <dbReference type="NCBI Taxonomy" id="439375"/>
    <lineage>
        <taxon>Bacteria</taxon>
        <taxon>Pseudomonadati</taxon>
        <taxon>Pseudomonadota</taxon>
        <taxon>Alphaproteobacteria</taxon>
        <taxon>Hyphomicrobiales</taxon>
        <taxon>Brucellaceae</taxon>
        <taxon>Brucella/Ochrobactrum group</taxon>
        <taxon>Brucella</taxon>
    </lineage>
</organism>
<gene>
    <name evidence="1" type="primary">apt</name>
    <name type="ordered locus">Oant_1626</name>
</gene>
<comment type="function">
    <text evidence="1">Catalyzes a salvage reaction resulting in the formation of AMP, that is energically less costly than de novo synthesis.</text>
</comment>
<comment type="catalytic activity">
    <reaction evidence="1">
        <text>AMP + diphosphate = 5-phospho-alpha-D-ribose 1-diphosphate + adenine</text>
        <dbReference type="Rhea" id="RHEA:16609"/>
        <dbReference type="ChEBI" id="CHEBI:16708"/>
        <dbReference type="ChEBI" id="CHEBI:33019"/>
        <dbReference type="ChEBI" id="CHEBI:58017"/>
        <dbReference type="ChEBI" id="CHEBI:456215"/>
        <dbReference type="EC" id="2.4.2.7"/>
    </reaction>
</comment>
<comment type="pathway">
    <text evidence="1">Purine metabolism; AMP biosynthesis via salvage pathway; AMP from adenine: step 1/1.</text>
</comment>
<comment type="subunit">
    <text evidence="1">Homodimer.</text>
</comment>
<comment type="subcellular location">
    <subcellularLocation>
        <location evidence="1">Cytoplasm</location>
    </subcellularLocation>
</comment>
<comment type="similarity">
    <text evidence="1">Belongs to the purine/pyrimidine phosphoribosyltransferase family.</text>
</comment>
<name>APT_BRUA4</name>
<feature type="chain" id="PRO_1000000317" description="Adenine phosphoribosyltransferase">
    <location>
        <begin position="1"/>
        <end position="181"/>
    </location>
</feature>
<evidence type="ECO:0000255" key="1">
    <source>
        <dbReference type="HAMAP-Rule" id="MF_00004"/>
    </source>
</evidence>